<reference key="1">
    <citation type="journal article" date="2006" name="Proc. Natl. Acad. Sci. U.S.A.">
        <title>Emergence and predominance of an H5N1 influenza variant in China.</title>
        <authorList>
            <person name="Smith G.J."/>
            <person name="Fan X.H."/>
            <person name="Wang J."/>
            <person name="Li K.S."/>
            <person name="Qin K."/>
            <person name="Zhang J.X."/>
            <person name="Vijaykrishna D."/>
            <person name="Cheung C.L."/>
            <person name="Huang K."/>
            <person name="Rayner J.M."/>
            <person name="Peiris J.S."/>
            <person name="Chen H."/>
            <person name="Webster R.G."/>
            <person name="Guan Y."/>
        </authorList>
    </citation>
    <scope>NUCLEOTIDE SEQUENCE [GENOMIC RNA]</scope>
</reference>
<sequence length="252" mass="27933">MSLLTEVETYVLSIIPSGPLKAEIAQKLEDVFAGKNTDLEALMEWLKTRPILSPLTKGILGFVFTLTVPSERGLQRRRFVQNALNGNGDPNNMDRAVKLYKKLKREITFHGAKEVALSYSTGALASCMGLIYNRMGTVTTEVAFGLVCATCEQIADSQHRSHRQMATITNPLIRHENRMVLASTTAKAMEQMAGSSEQAAEAMEVANQARQMVQAMRTIGTHPNSSAGLRDNLLENLQAYQKRMGVQMQRFK</sequence>
<name>M1_I05A1</name>
<proteinExistence type="inferred from homology"/>
<comment type="function">
    <text evidence="1">Plays critical roles in virus replication, from virus entry and uncoating to assembly and budding of the virus particle. M1 binding to ribonucleocapsids (RNPs) in nucleus seems to inhibit viral transcription. Interaction of viral NEP with M1-RNP is thought to promote nuclear export of the complex, which is targeted to the virion assembly site at the apical plasma membrane in polarized epithelial cells. Interactions with NA and HA may bring M1, a non-raft-associated protein, into lipid rafts. Forms a continuous shell on the inner side of the lipid bilayer in virion, where it binds the RNP. During virus entry into cell, the M2 ion channel acidifies the internal virion core, inducing M1 dissociation from the RNP. M1-free RNPs are transported to the nucleus, where viral transcription and replication can take place.</text>
</comment>
<comment type="function">
    <text evidence="1">Determines the virion's shape: spherical or filamentous. Clinical isolates of influenza are characterized by the presence of significant proportion of filamentous virions, whereas after multiple passage on eggs or cell culture, virions have only spherical morphology. Filamentous virions are thought to be important to infect neighboring cells, and spherical virions more suited to spread through aerosol between hosts organisms.</text>
</comment>
<comment type="subunit">
    <text evidence="1">Homodimer and homomultimer. Interacts with NEP. Binds ribonucleocapsid by both interacting with genomic RNA and NP protein. May interact with HA and NA. Cannot bind NP without genomic RNA.</text>
</comment>
<comment type="subcellular location">
    <subcellularLocation>
        <location evidence="1">Virion membrane</location>
        <topology evidence="1">Peripheral membrane protein</topology>
        <orientation evidence="1">Cytoplasmic side</orientation>
    </subcellularLocation>
    <subcellularLocation>
        <location evidence="1">Host nucleus</location>
    </subcellularLocation>
</comment>
<comment type="alternative products">
    <event type="alternative splicing"/>
    <isoform>
        <id>Q2LG20-1</id>
        <name>M1</name>
        <sequence type="displayed"/>
    </isoform>
    <isoform>
        <id>P0C5T6-1</id>
        <name>M2</name>
        <sequence type="external"/>
    </isoform>
    <text>Only the first 9 residues are shared by the 2 isoforms.</text>
</comment>
<comment type="miscellaneous">
    <text evidence="1">Most abundant protein in virion. When expressed alone can form virus-like particles in transfected cells.</text>
</comment>
<comment type="similarity">
    <text evidence="1">Belongs to the influenza viruses Matrix protein M1 family.</text>
</comment>
<organismHost>
    <name type="scientific">Aves</name>
    <dbReference type="NCBI Taxonomy" id="8782"/>
</organismHost>
<organismHost>
    <name type="scientific">Felis catus</name>
    <name type="common">Cat</name>
    <name type="synonym">Felis silvestris catus</name>
    <dbReference type="NCBI Taxonomy" id="9685"/>
</organismHost>
<organismHost>
    <name type="scientific">Homo sapiens</name>
    <name type="common">Human</name>
    <dbReference type="NCBI Taxonomy" id="9606"/>
</organismHost>
<organismHost>
    <name type="scientific">Panthera pardus</name>
    <name type="common">Leopard</name>
    <name type="synonym">Felis pardus</name>
    <dbReference type="NCBI Taxonomy" id="9691"/>
</organismHost>
<organismHost>
    <name type="scientific">Panthera tigris</name>
    <name type="common">Tiger</name>
    <dbReference type="NCBI Taxonomy" id="9694"/>
</organismHost>
<organismHost>
    <name type="scientific">Sus scrofa</name>
    <name type="common">Pig</name>
    <dbReference type="NCBI Taxonomy" id="9823"/>
</organismHost>
<organism>
    <name type="scientific">Influenza A virus (strain A/Goose/Guangxi/345/2005 H5N1 genotype G)</name>
    <dbReference type="NCBI Taxonomy" id="365089"/>
    <lineage>
        <taxon>Viruses</taxon>
        <taxon>Riboviria</taxon>
        <taxon>Orthornavirae</taxon>
        <taxon>Negarnaviricota</taxon>
        <taxon>Polyploviricotina</taxon>
        <taxon>Insthoviricetes</taxon>
        <taxon>Articulavirales</taxon>
        <taxon>Orthomyxoviridae</taxon>
        <taxon>Alphainfluenzavirus</taxon>
        <taxon>Alphainfluenzavirus influenzae</taxon>
        <taxon>Influenza A virus</taxon>
    </lineage>
</organism>
<evidence type="ECO:0000255" key="1">
    <source>
        <dbReference type="HAMAP-Rule" id="MF_04068"/>
    </source>
</evidence>
<gene>
    <name evidence="1" type="primary">M</name>
</gene>
<accession>Q2LG20</accession>
<feature type="chain" id="PRO_0000311620" description="Matrix protein 1">
    <location>
        <begin position="1"/>
        <end position="252"/>
    </location>
</feature>
<feature type="region of interest" description="Membrane-binding" evidence="1">
    <location>
        <begin position="1"/>
        <end position="164"/>
    </location>
</feature>
<feature type="region of interest" description="RNP-binding" evidence="1">
    <location>
        <begin position="165"/>
        <end position="252"/>
    </location>
</feature>
<feature type="short sequence motif" description="Nuclear localization signal" evidence="1">
    <location>
        <begin position="101"/>
        <end position="105"/>
    </location>
</feature>
<protein>
    <recommendedName>
        <fullName evidence="1">Matrix protein 1</fullName>
        <shortName evidence="1">M1</shortName>
    </recommendedName>
</protein>
<keyword id="KW-0025">Alternative splicing</keyword>
<keyword id="KW-1048">Host nucleus</keyword>
<keyword id="KW-0472">Membrane</keyword>
<keyword id="KW-0694">RNA-binding</keyword>
<keyword id="KW-0468">Viral matrix protein</keyword>
<keyword id="KW-0946">Virion</keyword>
<dbReference type="EMBL" id="DQ320962">
    <property type="protein sequence ID" value="ABC66604.1"/>
    <property type="molecule type" value="Genomic_RNA"/>
</dbReference>
<dbReference type="SMR" id="Q2LG20"/>
<dbReference type="GO" id="GO:0042025">
    <property type="term" value="C:host cell nucleus"/>
    <property type="evidence" value="ECO:0007669"/>
    <property type="project" value="UniProtKB-SubCell"/>
</dbReference>
<dbReference type="GO" id="GO:0016020">
    <property type="term" value="C:membrane"/>
    <property type="evidence" value="ECO:0007669"/>
    <property type="project" value="UniProtKB-KW"/>
</dbReference>
<dbReference type="GO" id="GO:0055036">
    <property type="term" value="C:virion membrane"/>
    <property type="evidence" value="ECO:0007669"/>
    <property type="project" value="UniProtKB-SubCell"/>
</dbReference>
<dbReference type="GO" id="GO:0003723">
    <property type="term" value="F:RNA binding"/>
    <property type="evidence" value="ECO:0007669"/>
    <property type="project" value="UniProtKB-UniRule"/>
</dbReference>
<dbReference type="GO" id="GO:0039660">
    <property type="term" value="F:structural constituent of virion"/>
    <property type="evidence" value="ECO:0007669"/>
    <property type="project" value="UniProtKB-UniRule"/>
</dbReference>
<dbReference type="GO" id="GO:0046761">
    <property type="term" value="P:viral budding from plasma membrane"/>
    <property type="evidence" value="ECO:0007669"/>
    <property type="project" value="UniProtKB-UniRule"/>
</dbReference>
<dbReference type="FunFam" id="1.10.10.180:FF:000001">
    <property type="entry name" value="Matrix protein 1"/>
    <property type="match status" value="1"/>
</dbReference>
<dbReference type="FunFam" id="1.20.91.10:FF:000001">
    <property type="entry name" value="Matrix protein 1"/>
    <property type="match status" value="1"/>
</dbReference>
<dbReference type="Gene3D" id="1.10.10.180">
    <property type="match status" value="1"/>
</dbReference>
<dbReference type="Gene3D" id="1.20.91.10">
    <property type="match status" value="1"/>
</dbReference>
<dbReference type="HAMAP" id="MF_04068">
    <property type="entry name" value="INFV_M1"/>
    <property type="match status" value="1"/>
</dbReference>
<dbReference type="InterPro" id="IPR036039">
    <property type="entry name" value="Flu_matrix_M1"/>
</dbReference>
<dbReference type="InterPro" id="IPR013188">
    <property type="entry name" value="Flu_matrix_M1_C"/>
</dbReference>
<dbReference type="InterPro" id="IPR001561">
    <property type="entry name" value="Flu_matrix_M1_N"/>
</dbReference>
<dbReference type="InterPro" id="IPR015423">
    <property type="entry name" value="Flu_matrix_M1_N_sub1"/>
</dbReference>
<dbReference type="InterPro" id="IPR015799">
    <property type="entry name" value="Flu_matrix_M1_N_sub2"/>
</dbReference>
<dbReference type="InterPro" id="IPR037533">
    <property type="entry name" value="INFV_M1"/>
</dbReference>
<dbReference type="Pfam" id="PF00598">
    <property type="entry name" value="Flu_M1"/>
    <property type="match status" value="1"/>
</dbReference>
<dbReference type="Pfam" id="PF08289">
    <property type="entry name" value="Flu_M1_C"/>
    <property type="match status" value="1"/>
</dbReference>
<dbReference type="SMART" id="SM00759">
    <property type="entry name" value="Flu_M1_C"/>
    <property type="match status" value="1"/>
</dbReference>
<dbReference type="SUPFAM" id="SSF48145">
    <property type="entry name" value="Influenza virus matrix protein M1"/>
    <property type="match status" value="1"/>
</dbReference>